<proteinExistence type="inferred from homology"/>
<sequence>MSKFTHINEQGNAKMVDVSNKNITKRTAQAHSSITVNETIYQQIIDNTNKKGNVLNTAQIAGIMAAKNTSTIIPMCHPLPLTGIDVQFNWQINDNTTYTLNITAIVSTTGKTGVEMEALTAASATALTVYDMTKAVDKGMIIGETYLESKSGGKSGDYRR</sequence>
<accession>Q4L8D8</accession>
<name>MOAC_STAHJ</name>
<comment type="function">
    <text evidence="1">Catalyzes the conversion of (8S)-3',8-cyclo-7,8-dihydroguanosine 5'-triphosphate to cyclic pyranopterin monophosphate (cPMP).</text>
</comment>
<comment type="catalytic activity">
    <reaction evidence="1">
        <text>(8S)-3',8-cyclo-7,8-dihydroguanosine 5'-triphosphate = cyclic pyranopterin phosphate + diphosphate</text>
        <dbReference type="Rhea" id="RHEA:49580"/>
        <dbReference type="ChEBI" id="CHEBI:33019"/>
        <dbReference type="ChEBI" id="CHEBI:59648"/>
        <dbReference type="ChEBI" id="CHEBI:131766"/>
        <dbReference type="EC" id="4.6.1.17"/>
    </reaction>
</comment>
<comment type="pathway">
    <text evidence="1">Cofactor biosynthesis; molybdopterin biosynthesis.</text>
</comment>
<comment type="subunit">
    <text evidence="1">Homohexamer; trimer of dimers.</text>
</comment>
<comment type="similarity">
    <text evidence="1">Belongs to the MoaC family.</text>
</comment>
<organism>
    <name type="scientific">Staphylococcus haemolyticus (strain JCSC1435)</name>
    <dbReference type="NCBI Taxonomy" id="279808"/>
    <lineage>
        <taxon>Bacteria</taxon>
        <taxon>Bacillati</taxon>
        <taxon>Bacillota</taxon>
        <taxon>Bacilli</taxon>
        <taxon>Bacillales</taxon>
        <taxon>Staphylococcaceae</taxon>
        <taxon>Staphylococcus</taxon>
    </lineage>
</organism>
<evidence type="ECO:0000255" key="1">
    <source>
        <dbReference type="HAMAP-Rule" id="MF_01224"/>
    </source>
</evidence>
<feature type="chain" id="PRO_0000097837" description="Cyclic pyranopterin monophosphate synthase">
    <location>
        <begin position="1"/>
        <end position="160"/>
    </location>
</feature>
<feature type="active site" evidence="1">
    <location>
        <position position="131"/>
    </location>
</feature>
<feature type="binding site" evidence="1">
    <location>
        <begin position="75"/>
        <end position="77"/>
    </location>
    <ligand>
        <name>substrate</name>
    </ligand>
</feature>
<feature type="binding site" evidence="1">
    <location>
        <begin position="116"/>
        <end position="117"/>
    </location>
    <ligand>
        <name>substrate</name>
    </ligand>
</feature>
<dbReference type="EC" id="4.6.1.17" evidence="1"/>
<dbReference type="EMBL" id="AP006716">
    <property type="protein sequence ID" value="BAE04087.1"/>
    <property type="molecule type" value="Genomic_DNA"/>
</dbReference>
<dbReference type="RefSeq" id="WP_011275101.1">
    <property type="nucleotide sequence ID" value="NC_007168.1"/>
</dbReference>
<dbReference type="SMR" id="Q4L8D8"/>
<dbReference type="GeneID" id="93780168"/>
<dbReference type="KEGG" id="sha:SH0778"/>
<dbReference type="eggNOG" id="COG0315">
    <property type="taxonomic scope" value="Bacteria"/>
</dbReference>
<dbReference type="HOGENOM" id="CLU_074693_1_1_9"/>
<dbReference type="OrthoDB" id="9794429at2"/>
<dbReference type="UniPathway" id="UPA00344"/>
<dbReference type="Proteomes" id="UP000000543">
    <property type="component" value="Chromosome"/>
</dbReference>
<dbReference type="GO" id="GO:0061799">
    <property type="term" value="F:cyclic pyranopterin monophosphate synthase activity"/>
    <property type="evidence" value="ECO:0007669"/>
    <property type="project" value="UniProtKB-UniRule"/>
</dbReference>
<dbReference type="GO" id="GO:0006777">
    <property type="term" value="P:Mo-molybdopterin cofactor biosynthetic process"/>
    <property type="evidence" value="ECO:0007669"/>
    <property type="project" value="UniProtKB-UniRule"/>
</dbReference>
<dbReference type="CDD" id="cd01420">
    <property type="entry name" value="MoaC_PE"/>
    <property type="match status" value="1"/>
</dbReference>
<dbReference type="Gene3D" id="3.30.70.640">
    <property type="entry name" value="Molybdopterin cofactor biosynthesis C (MoaC) domain"/>
    <property type="match status" value="1"/>
</dbReference>
<dbReference type="HAMAP" id="MF_01224_B">
    <property type="entry name" value="MoaC_B"/>
    <property type="match status" value="1"/>
</dbReference>
<dbReference type="InterPro" id="IPR023045">
    <property type="entry name" value="MoaC"/>
</dbReference>
<dbReference type="InterPro" id="IPR047594">
    <property type="entry name" value="MoaC_bact/euk"/>
</dbReference>
<dbReference type="InterPro" id="IPR036522">
    <property type="entry name" value="MoaC_sf"/>
</dbReference>
<dbReference type="InterPro" id="IPR050105">
    <property type="entry name" value="MoCo_biosynth_MoaA/MoaC"/>
</dbReference>
<dbReference type="InterPro" id="IPR002820">
    <property type="entry name" value="Mopterin_CF_biosynth-C_dom"/>
</dbReference>
<dbReference type="NCBIfam" id="TIGR00581">
    <property type="entry name" value="moaC"/>
    <property type="match status" value="1"/>
</dbReference>
<dbReference type="NCBIfam" id="NF006870">
    <property type="entry name" value="PRK09364.1"/>
    <property type="match status" value="1"/>
</dbReference>
<dbReference type="PANTHER" id="PTHR22960">
    <property type="entry name" value="MOLYBDOPTERIN COFACTOR SYNTHESIS PROTEIN A"/>
    <property type="match status" value="1"/>
</dbReference>
<dbReference type="Pfam" id="PF01967">
    <property type="entry name" value="MoaC"/>
    <property type="match status" value="1"/>
</dbReference>
<dbReference type="SUPFAM" id="SSF55040">
    <property type="entry name" value="Molybdenum cofactor biosynthesis protein C, MoaC"/>
    <property type="match status" value="1"/>
</dbReference>
<protein>
    <recommendedName>
        <fullName evidence="1">Cyclic pyranopterin monophosphate synthase</fullName>
        <ecNumber evidence="1">4.6.1.17</ecNumber>
    </recommendedName>
    <alternativeName>
        <fullName evidence="1">Molybdenum cofactor biosynthesis protein C</fullName>
    </alternativeName>
</protein>
<gene>
    <name evidence="1" type="primary">moaC</name>
    <name type="ordered locus">SH0778</name>
</gene>
<keyword id="KW-0456">Lyase</keyword>
<keyword id="KW-0501">Molybdenum cofactor biosynthesis</keyword>
<reference key="1">
    <citation type="journal article" date="2005" name="J. Bacteriol.">
        <title>Whole-genome sequencing of Staphylococcus haemolyticus uncovers the extreme plasticity of its genome and the evolution of human-colonizing staphylococcal species.</title>
        <authorList>
            <person name="Takeuchi F."/>
            <person name="Watanabe S."/>
            <person name="Baba T."/>
            <person name="Yuzawa H."/>
            <person name="Ito T."/>
            <person name="Morimoto Y."/>
            <person name="Kuroda M."/>
            <person name="Cui L."/>
            <person name="Takahashi M."/>
            <person name="Ankai A."/>
            <person name="Baba S."/>
            <person name="Fukui S."/>
            <person name="Lee J.C."/>
            <person name="Hiramatsu K."/>
        </authorList>
    </citation>
    <scope>NUCLEOTIDE SEQUENCE [LARGE SCALE GENOMIC DNA]</scope>
    <source>
        <strain>JCSC1435</strain>
    </source>
</reference>